<name>Y780_STAAR</name>
<reference key="1">
    <citation type="journal article" date="2004" name="Proc. Natl. Acad. Sci. U.S.A.">
        <title>Complete genomes of two clinical Staphylococcus aureus strains: evidence for the rapid evolution of virulence and drug resistance.</title>
        <authorList>
            <person name="Holden M.T.G."/>
            <person name="Feil E.J."/>
            <person name="Lindsay J.A."/>
            <person name="Peacock S.J."/>
            <person name="Day N.P.J."/>
            <person name="Enright M.C."/>
            <person name="Foster T.J."/>
            <person name="Moore C.E."/>
            <person name="Hurst L."/>
            <person name="Atkin R."/>
            <person name="Barron A."/>
            <person name="Bason N."/>
            <person name="Bentley S.D."/>
            <person name="Chillingworth C."/>
            <person name="Chillingworth T."/>
            <person name="Churcher C."/>
            <person name="Clark L."/>
            <person name="Corton C."/>
            <person name="Cronin A."/>
            <person name="Doggett J."/>
            <person name="Dowd L."/>
            <person name="Feltwell T."/>
            <person name="Hance Z."/>
            <person name="Harris B."/>
            <person name="Hauser H."/>
            <person name="Holroyd S."/>
            <person name="Jagels K."/>
            <person name="James K.D."/>
            <person name="Lennard N."/>
            <person name="Line A."/>
            <person name="Mayes R."/>
            <person name="Moule S."/>
            <person name="Mungall K."/>
            <person name="Ormond D."/>
            <person name="Quail M.A."/>
            <person name="Rabbinowitsch E."/>
            <person name="Rutherford K.M."/>
            <person name="Sanders M."/>
            <person name="Sharp S."/>
            <person name="Simmonds M."/>
            <person name="Stevens K."/>
            <person name="Whitehead S."/>
            <person name="Barrell B.G."/>
            <person name="Spratt B.G."/>
            <person name="Parkhill J."/>
        </authorList>
    </citation>
    <scope>NUCLEOTIDE SEQUENCE [LARGE SCALE GENOMIC DNA]</scope>
    <source>
        <strain>MRSA252</strain>
    </source>
</reference>
<reference key="2">
    <citation type="journal article" date="2007" name="J. Biol. Chem.">
        <title>Identification of a soluble diacylglycerol kinase required for lipoteichoic acid production in Bacillus subtilis.</title>
        <authorList>
            <person name="Jerga A."/>
            <person name="Lu Y.-J."/>
            <person name="Schujman G.E."/>
            <person name="de Mendoza D."/>
            <person name="Rock C.O."/>
        </authorList>
    </citation>
    <scope>LACK OF FUNCTION AS A DIACYLGLYCEROL KINASE</scope>
</reference>
<dbReference type="EC" id="2.7.1.-"/>
<dbReference type="EMBL" id="BX571856">
    <property type="protein sequence ID" value="CAG39790.1"/>
    <property type="molecule type" value="Genomic_DNA"/>
</dbReference>
<dbReference type="RefSeq" id="WP_000429002.1">
    <property type="nucleotide sequence ID" value="NC_002952.2"/>
</dbReference>
<dbReference type="SMR" id="Q6GIR5"/>
<dbReference type="KEGG" id="sar:SAR0780"/>
<dbReference type="HOGENOM" id="CLU_045532_1_0_9"/>
<dbReference type="Proteomes" id="UP000000596">
    <property type="component" value="Chromosome"/>
</dbReference>
<dbReference type="GO" id="GO:0005886">
    <property type="term" value="C:plasma membrane"/>
    <property type="evidence" value="ECO:0007669"/>
    <property type="project" value="TreeGrafter"/>
</dbReference>
<dbReference type="GO" id="GO:0005524">
    <property type="term" value="F:ATP binding"/>
    <property type="evidence" value="ECO:0007669"/>
    <property type="project" value="UniProtKB-KW"/>
</dbReference>
<dbReference type="GO" id="GO:0004143">
    <property type="term" value="F:ATP-dependent diacylglycerol kinase activity"/>
    <property type="evidence" value="ECO:0007669"/>
    <property type="project" value="TreeGrafter"/>
</dbReference>
<dbReference type="GO" id="GO:0046872">
    <property type="term" value="F:metal ion binding"/>
    <property type="evidence" value="ECO:0007669"/>
    <property type="project" value="UniProtKB-KW"/>
</dbReference>
<dbReference type="GO" id="GO:0008654">
    <property type="term" value="P:phospholipid biosynthetic process"/>
    <property type="evidence" value="ECO:0007669"/>
    <property type="project" value="UniProtKB-KW"/>
</dbReference>
<dbReference type="Gene3D" id="2.60.200.40">
    <property type="match status" value="1"/>
</dbReference>
<dbReference type="Gene3D" id="3.40.50.10330">
    <property type="entry name" value="Probable inorganic polyphosphate/atp-NAD kinase, domain 1"/>
    <property type="match status" value="1"/>
</dbReference>
<dbReference type="InterPro" id="IPR017438">
    <property type="entry name" value="ATP-NAD_kinase_N"/>
</dbReference>
<dbReference type="InterPro" id="IPR005218">
    <property type="entry name" value="Diacylglycerol/lipid_kinase"/>
</dbReference>
<dbReference type="InterPro" id="IPR001206">
    <property type="entry name" value="Diacylglycerol_kinase_cat_dom"/>
</dbReference>
<dbReference type="InterPro" id="IPR050187">
    <property type="entry name" value="Lipid_Phosphate_FormReg"/>
</dbReference>
<dbReference type="InterPro" id="IPR016064">
    <property type="entry name" value="NAD/diacylglycerol_kinase_sf"/>
</dbReference>
<dbReference type="InterPro" id="IPR045540">
    <property type="entry name" value="YegS/DAGK_C"/>
</dbReference>
<dbReference type="NCBIfam" id="TIGR00147">
    <property type="entry name" value="YegS/Rv2252/BmrU family lipid kinase"/>
    <property type="match status" value="1"/>
</dbReference>
<dbReference type="PANTHER" id="PTHR12358:SF106">
    <property type="entry name" value="LIPID KINASE YEGS"/>
    <property type="match status" value="1"/>
</dbReference>
<dbReference type="PANTHER" id="PTHR12358">
    <property type="entry name" value="SPHINGOSINE KINASE"/>
    <property type="match status" value="1"/>
</dbReference>
<dbReference type="Pfam" id="PF00781">
    <property type="entry name" value="DAGK_cat"/>
    <property type="match status" value="1"/>
</dbReference>
<dbReference type="Pfam" id="PF19279">
    <property type="entry name" value="YegS_C"/>
    <property type="match status" value="1"/>
</dbReference>
<dbReference type="SMART" id="SM00046">
    <property type="entry name" value="DAGKc"/>
    <property type="match status" value="1"/>
</dbReference>
<dbReference type="SUPFAM" id="SSF111331">
    <property type="entry name" value="NAD kinase/diacylglycerol kinase-like"/>
    <property type="match status" value="1"/>
</dbReference>
<dbReference type="PROSITE" id="PS50146">
    <property type="entry name" value="DAGK"/>
    <property type="match status" value="1"/>
</dbReference>
<keyword id="KW-0067">ATP-binding</keyword>
<keyword id="KW-0418">Kinase</keyword>
<keyword id="KW-0444">Lipid biosynthesis</keyword>
<keyword id="KW-0443">Lipid metabolism</keyword>
<keyword id="KW-0460">Magnesium</keyword>
<keyword id="KW-0479">Metal-binding</keyword>
<keyword id="KW-0547">Nucleotide-binding</keyword>
<keyword id="KW-0594">Phospholipid biosynthesis</keyword>
<keyword id="KW-1208">Phospholipid metabolism</keyword>
<keyword id="KW-0808">Transferase</keyword>
<feature type="chain" id="PRO_0000386504" description="Putative lipid kinase SAR0780">
    <location>
        <begin position="1"/>
        <end position="305"/>
    </location>
</feature>
<feature type="domain" description="DAGKc" evidence="2">
    <location>
        <begin position="3"/>
        <end position="139"/>
    </location>
</feature>
<feature type="active site" description="Proton acceptor" evidence="1">
    <location>
        <position position="281"/>
    </location>
</feature>
<feature type="binding site" evidence="2">
    <location>
        <position position="44"/>
    </location>
    <ligand>
        <name>ATP</name>
        <dbReference type="ChEBI" id="CHEBI:30616"/>
    </ligand>
</feature>
<feature type="binding site" evidence="2">
    <location>
        <begin position="74"/>
        <end position="80"/>
    </location>
    <ligand>
        <name>ATP</name>
        <dbReference type="ChEBI" id="CHEBI:30616"/>
    </ligand>
</feature>
<feature type="binding site" evidence="2">
    <location>
        <position position="101"/>
    </location>
    <ligand>
        <name>ATP</name>
        <dbReference type="ChEBI" id="CHEBI:30616"/>
    </ligand>
</feature>
<feature type="binding site" evidence="1">
    <location>
        <position position="220"/>
    </location>
    <ligand>
        <name>Mg(2+)</name>
        <dbReference type="ChEBI" id="CHEBI:18420"/>
    </ligand>
</feature>
<feature type="binding site" evidence="1">
    <location>
        <position position="223"/>
    </location>
    <ligand>
        <name>Mg(2+)</name>
        <dbReference type="ChEBI" id="CHEBI:18420"/>
    </ligand>
</feature>
<feature type="binding site" evidence="1">
    <location>
        <position position="225"/>
    </location>
    <ligand>
        <name>Mg(2+)</name>
        <dbReference type="ChEBI" id="CHEBI:18420"/>
    </ligand>
</feature>
<gene>
    <name type="ordered locus">SAR0780</name>
</gene>
<protein>
    <recommendedName>
        <fullName>Putative lipid kinase SAR0780</fullName>
        <ecNumber>2.7.1.-</ecNumber>
    </recommendedName>
</protein>
<proteinExistence type="evidence at protein level"/>
<organism>
    <name type="scientific">Staphylococcus aureus (strain MRSA252)</name>
    <dbReference type="NCBI Taxonomy" id="282458"/>
    <lineage>
        <taxon>Bacteria</taxon>
        <taxon>Bacillati</taxon>
        <taxon>Bacillota</taxon>
        <taxon>Bacilli</taxon>
        <taxon>Bacillales</taxon>
        <taxon>Staphylococcaceae</taxon>
        <taxon>Staphylococcus</taxon>
    </lineage>
</organism>
<sequence>MENKYTHGVLFYHEHSGLKNINQGIGEVTTALSSICKHLSIQLSENEGDIIKYCQEIKAKDYAKDVDILFILGGDGTVNELINGVMTHDLQLPIGILPGGTFNDFTKTLNIAPNHKQASEQMISAQVGTYDVIKINNQYALNFVGLGLIVQNAENVQDGSKDIFGKLSYIGSTVKTLLNPTQFNYQLSIDDKTYSGETTMILSANGPFIGGSRIPLTDLSPQDGELNTFIFNEQSFSILNDIFKKRDSMNWNEITQGIEHIPGKKISLTTDPTMKVDIDGEISLETPIDIEVIPNAIQLLTVNDL</sequence>
<comment type="function">
    <text>May catalyze the ATP-dependent phosphorylation of lipids other than diacylglycerol (DAG). In fact, is not able to exhibit diacylglycerol kinase activity in vitro.</text>
</comment>
<comment type="cofactor">
    <cofactor evidence="1">
        <name>Mg(2+)</name>
        <dbReference type="ChEBI" id="CHEBI:18420"/>
    </cofactor>
    <text evidence="1">Binds 1 Mg(2+) ion per subunit. This ion appears to have a structural role and is required for catalytic activity.</text>
</comment>
<comment type="similarity">
    <text evidence="3">Belongs to the diacylglycerol/lipid kinase family.</text>
</comment>
<evidence type="ECO:0000250" key="1"/>
<evidence type="ECO:0000255" key="2">
    <source>
        <dbReference type="PROSITE-ProRule" id="PRU00783"/>
    </source>
</evidence>
<evidence type="ECO:0000305" key="3"/>
<accession>Q6GIR5</accession>